<dbReference type="EC" id="2.3.1.251" evidence="1"/>
<dbReference type="EMBL" id="CP000305">
    <property type="protein sequence ID" value="ABG18706.1"/>
    <property type="molecule type" value="Genomic_DNA"/>
</dbReference>
<dbReference type="EMBL" id="ACNQ01000013">
    <property type="protein sequence ID" value="EEO76469.1"/>
    <property type="molecule type" value="Genomic_DNA"/>
</dbReference>
<dbReference type="PIR" id="AG0212">
    <property type="entry name" value="AG0212"/>
</dbReference>
<dbReference type="RefSeq" id="WP_002221007.1">
    <property type="nucleotide sequence ID" value="NZ_ACNQ01000013.1"/>
</dbReference>
<dbReference type="SMR" id="Q1CH24"/>
<dbReference type="GeneID" id="57976834"/>
<dbReference type="KEGG" id="ypn:YPN_2378"/>
<dbReference type="HOGENOM" id="CLU_104099_0_0_6"/>
<dbReference type="Proteomes" id="UP000008936">
    <property type="component" value="Chromosome"/>
</dbReference>
<dbReference type="GO" id="GO:0009279">
    <property type="term" value="C:cell outer membrane"/>
    <property type="evidence" value="ECO:0007669"/>
    <property type="project" value="UniProtKB-SubCell"/>
</dbReference>
<dbReference type="GO" id="GO:0016746">
    <property type="term" value="F:acyltransferase activity"/>
    <property type="evidence" value="ECO:0007669"/>
    <property type="project" value="UniProtKB-UniRule"/>
</dbReference>
<dbReference type="GO" id="GO:0009245">
    <property type="term" value="P:lipid A biosynthetic process"/>
    <property type="evidence" value="ECO:0007669"/>
    <property type="project" value="UniProtKB-UniRule"/>
</dbReference>
<dbReference type="FunFam" id="2.40.160.20:FF:000002">
    <property type="entry name" value="Lipid A palmitoyltransferase PagP"/>
    <property type="match status" value="1"/>
</dbReference>
<dbReference type="Gene3D" id="2.40.160.20">
    <property type="match status" value="1"/>
</dbReference>
<dbReference type="HAMAP" id="MF_00837">
    <property type="entry name" value="PagP_transferase"/>
    <property type="match status" value="1"/>
</dbReference>
<dbReference type="InterPro" id="IPR009746">
    <property type="entry name" value="LipidA_acyl_PagP"/>
</dbReference>
<dbReference type="InterPro" id="IPR011250">
    <property type="entry name" value="OMP/PagP_b-brl"/>
</dbReference>
<dbReference type="NCBIfam" id="NF008271">
    <property type="entry name" value="PRK11045.1"/>
    <property type="match status" value="1"/>
</dbReference>
<dbReference type="Pfam" id="PF07017">
    <property type="entry name" value="PagP"/>
    <property type="match status" value="1"/>
</dbReference>
<dbReference type="SUPFAM" id="SSF56925">
    <property type="entry name" value="OMPA-like"/>
    <property type="match status" value="1"/>
</dbReference>
<accession>Q1CH24</accession>
<protein>
    <recommendedName>
        <fullName evidence="1">Lipid A acyltransferase PagP</fullName>
        <ecNumber evidence="1">2.3.1.251</ecNumber>
    </recommendedName>
    <alternativeName>
        <fullName evidence="1">Lipid A acylation protein</fullName>
    </alternativeName>
</protein>
<sequence>MNYKDIINACILSGVFLLHSPSALADTPSVGVSKGQESLQPAAEGNLWQRLIRNVSLAWNSPHQELYIPVNTWHNRWTYDDEKIASYNERPWGVGYGKYRYDEDNNWHSVYAMAFMDSHNRVEPILGYGYQKMWIPGEREGWRFGAGFTASITARYEYHYIPLPLPLPLISIEYNRLSLQTTYIPGTYNNGNVLFTWIR</sequence>
<feature type="signal peptide" evidence="1">
    <location>
        <begin position="1"/>
        <end position="25"/>
    </location>
</feature>
<feature type="chain" id="PRO_5000115428" description="Lipid A acyltransferase PagP">
    <location>
        <begin position="26"/>
        <end position="199"/>
    </location>
</feature>
<feature type="active site" evidence="1">
    <location>
        <position position="74"/>
    </location>
</feature>
<feature type="active site" evidence="1">
    <location>
        <position position="117"/>
    </location>
</feature>
<feature type="active site" evidence="1">
    <location>
        <position position="118"/>
    </location>
</feature>
<feature type="site" description="Role in lipopolysaccharide recognition" evidence="1">
    <location>
        <position position="83"/>
    </location>
</feature>
<feature type="site" description="Role in the phospholipid gating" evidence="1">
    <location>
        <position position="188"/>
    </location>
</feature>
<keyword id="KW-0012">Acyltransferase</keyword>
<keyword id="KW-0998">Cell outer membrane</keyword>
<keyword id="KW-0472">Membrane</keyword>
<keyword id="KW-0732">Signal</keyword>
<keyword id="KW-0808">Transferase</keyword>
<gene>
    <name evidence="1" type="primary">pagP</name>
    <name type="ordered locus">YPN_2378</name>
    <name type="ORF">YP516_2677</name>
</gene>
<organism>
    <name type="scientific">Yersinia pestis bv. Antiqua (strain Nepal516)</name>
    <dbReference type="NCBI Taxonomy" id="377628"/>
    <lineage>
        <taxon>Bacteria</taxon>
        <taxon>Pseudomonadati</taxon>
        <taxon>Pseudomonadota</taxon>
        <taxon>Gammaproteobacteria</taxon>
        <taxon>Enterobacterales</taxon>
        <taxon>Yersiniaceae</taxon>
        <taxon>Yersinia</taxon>
    </lineage>
</organism>
<proteinExistence type="inferred from homology"/>
<evidence type="ECO:0000255" key="1">
    <source>
        <dbReference type="HAMAP-Rule" id="MF_00837"/>
    </source>
</evidence>
<reference key="1">
    <citation type="journal article" date="2006" name="J. Bacteriol.">
        <title>Complete genome sequence of Yersinia pestis strains Antiqua and Nepal516: evidence of gene reduction in an emerging pathogen.</title>
        <authorList>
            <person name="Chain P.S.G."/>
            <person name="Hu P."/>
            <person name="Malfatti S.A."/>
            <person name="Radnedge L."/>
            <person name="Larimer F."/>
            <person name="Vergez L.M."/>
            <person name="Worsham P."/>
            <person name="Chu M.C."/>
            <person name="Andersen G.L."/>
        </authorList>
    </citation>
    <scope>NUCLEOTIDE SEQUENCE [LARGE SCALE GENOMIC DNA]</scope>
    <source>
        <strain>Nepal516</strain>
    </source>
</reference>
<reference key="2">
    <citation type="submission" date="2009-04" db="EMBL/GenBank/DDBJ databases">
        <title>Yersinia pestis Nepal516A whole genome shotgun sequencing project.</title>
        <authorList>
            <person name="Plunkett G. III"/>
            <person name="Anderson B.D."/>
            <person name="Baumler D.J."/>
            <person name="Burland V."/>
            <person name="Cabot E.L."/>
            <person name="Glasner J.D."/>
            <person name="Mau B."/>
            <person name="Neeno-Eckwall E."/>
            <person name="Perna N.T."/>
            <person name="Munk A.C."/>
            <person name="Tapia R."/>
            <person name="Green L.D."/>
            <person name="Rogers Y.C."/>
            <person name="Detter J.C."/>
            <person name="Bruce D.C."/>
            <person name="Brettin T.S."/>
        </authorList>
    </citation>
    <scope>NUCLEOTIDE SEQUENCE [LARGE SCALE GENOMIC DNA]</scope>
    <source>
        <strain>Nepal516</strain>
    </source>
</reference>
<name>PAGP_YERPN</name>
<comment type="function">
    <text evidence="1">Transfers a fatty acid residue from the sn-1 position of a phospholipid to the N-linked hydroxyfatty acid chain on the proximal unit of lipid A or its precursors.</text>
</comment>
<comment type="catalytic activity">
    <reaction evidence="1">
        <text>a lipid A + a 1,2-diacyl-sn-glycero-3-phosphocholine = a hepta-acyl lipid A + a 2-acyl-sn-glycero-3-phosphocholine</text>
        <dbReference type="Rhea" id="RHEA:74275"/>
        <dbReference type="ChEBI" id="CHEBI:57643"/>
        <dbReference type="ChEBI" id="CHEBI:57875"/>
        <dbReference type="ChEBI" id="CHEBI:193141"/>
        <dbReference type="ChEBI" id="CHEBI:193142"/>
        <dbReference type="EC" id="2.3.1.251"/>
    </reaction>
</comment>
<comment type="catalytic activity">
    <reaction evidence="1">
        <text>a lipid IVA + a 1,2-diacyl-sn-glycero-3-phosphocholine = a lipid IVB + a 2-acyl-sn-glycero-3-phosphocholine</text>
        <dbReference type="Rhea" id="RHEA:74279"/>
        <dbReference type="ChEBI" id="CHEBI:57643"/>
        <dbReference type="ChEBI" id="CHEBI:57875"/>
        <dbReference type="ChEBI" id="CHEBI:176425"/>
        <dbReference type="ChEBI" id="CHEBI:193143"/>
        <dbReference type="EC" id="2.3.1.251"/>
    </reaction>
</comment>
<comment type="catalytic activity">
    <reaction evidence="1">
        <text>a lipid IIA + a 1,2-diacyl-sn-glycero-3-phosphocholine = a lipid IIB + a 2-acyl-sn-glycero-3-phosphocholine</text>
        <dbReference type="Rhea" id="RHEA:74283"/>
        <dbReference type="ChEBI" id="CHEBI:57643"/>
        <dbReference type="ChEBI" id="CHEBI:57875"/>
        <dbReference type="ChEBI" id="CHEBI:193144"/>
        <dbReference type="ChEBI" id="CHEBI:193145"/>
        <dbReference type="EC" id="2.3.1.251"/>
    </reaction>
</comment>
<comment type="subunit">
    <text evidence="1">Homodimer.</text>
</comment>
<comment type="subcellular location">
    <subcellularLocation>
        <location evidence="1">Cell outer membrane</location>
    </subcellularLocation>
</comment>
<comment type="similarity">
    <text evidence="1">Belongs to the lipid A palmitoyltransferase family.</text>
</comment>